<accession>O13685</accession>
<keyword id="KW-0067">ATP-binding</keyword>
<keyword id="KW-0547">Nucleotide-binding</keyword>
<keyword id="KW-1185">Reference proteome</keyword>
<keyword id="KW-0808">Transferase</keyword>
<keyword id="KW-0833">Ubl conjugation pathway</keyword>
<sequence length="148" mass="16856">MALPKRIIKEIETLTRDPPPGIVAAPTEDNLRYFKITMEGPQQSAYEGGKFHLELFLPDEYPMMPPNVRFLTKIYHPNVDKLGRICLSTLKKDWSPALQIRTVLLSIQALMGAPNPDDPLDNDVAKIWKENEPQAIANAREWTKKYAV</sequence>
<protein>
    <recommendedName>
        <fullName>Ubiquitin-conjugating enzyme E2 13</fullName>
        <ecNumber>2.3.2.23</ecNumber>
    </recommendedName>
    <alternativeName>
        <fullName>E2 ubiquitin-conjugating enzyme 13</fullName>
    </alternativeName>
    <alternativeName>
        <fullName>Ubiquitin carrier protein 13</fullName>
    </alternativeName>
    <alternativeName>
        <fullName>Ubiquitin-protein ligase 13</fullName>
    </alternativeName>
</protein>
<comment type="function">
    <text evidence="3">Has a role in the DNA error-free postreplication repair (PRR) pathway. The ubc13/spm2 heterodimer catalyzes the synthesis of non-canonical poly-ubiquitin chains that are linked through 'Lys-63'.</text>
</comment>
<comment type="catalytic activity">
    <reaction evidence="1 2">
        <text>S-ubiquitinyl-[E1 ubiquitin-activating enzyme]-L-cysteine + [E2 ubiquitin-conjugating enzyme]-L-cysteine = [E1 ubiquitin-activating enzyme]-L-cysteine + S-ubiquitinyl-[E2 ubiquitin-conjugating enzyme]-L-cysteine.</text>
        <dbReference type="EC" id="2.3.2.23"/>
    </reaction>
</comment>
<comment type="pathway">
    <text evidence="1">Protein modification; protein ubiquitination.</text>
</comment>
<comment type="subunit">
    <text>Heterodimer with spm2.</text>
</comment>
<comment type="similarity">
    <text evidence="1">Belongs to the ubiquitin-conjugating enzyme family.</text>
</comment>
<name>UBC13_SCHPO</name>
<proteinExistence type="evidence at protein level"/>
<reference key="1">
    <citation type="journal article" date="2002" name="DNA Repair">
        <title>Structural and functional conservation of error-free DNA postreplication repair in Schizosaccharomyces pombe.</title>
        <authorList>
            <person name="Brown M."/>
            <person name="Zhu Y."/>
            <person name="Hemmingsen S.M."/>
            <person name="Xiao W."/>
        </authorList>
    </citation>
    <scope>NUCLEOTIDE SEQUENCE [MRNA]</scope>
    <scope>FUNCTION</scope>
    <scope>INTERACTION WITH SPM2</scope>
</reference>
<reference key="2">
    <citation type="journal article" date="2002" name="Nature">
        <title>The genome sequence of Schizosaccharomyces pombe.</title>
        <authorList>
            <person name="Wood V."/>
            <person name="Gwilliam R."/>
            <person name="Rajandream M.A."/>
            <person name="Lyne M.H."/>
            <person name="Lyne R."/>
            <person name="Stewart A."/>
            <person name="Sgouros J.G."/>
            <person name="Peat N."/>
            <person name="Hayles J."/>
            <person name="Baker S.G."/>
            <person name="Basham D."/>
            <person name="Bowman S."/>
            <person name="Brooks K."/>
            <person name="Brown D."/>
            <person name="Brown S."/>
            <person name="Chillingworth T."/>
            <person name="Churcher C.M."/>
            <person name="Collins M."/>
            <person name="Connor R."/>
            <person name="Cronin A."/>
            <person name="Davis P."/>
            <person name="Feltwell T."/>
            <person name="Fraser A."/>
            <person name="Gentles S."/>
            <person name="Goble A."/>
            <person name="Hamlin N."/>
            <person name="Harris D.E."/>
            <person name="Hidalgo J."/>
            <person name="Hodgson G."/>
            <person name="Holroyd S."/>
            <person name="Hornsby T."/>
            <person name="Howarth S."/>
            <person name="Huckle E.J."/>
            <person name="Hunt S."/>
            <person name="Jagels K."/>
            <person name="James K.D."/>
            <person name="Jones L."/>
            <person name="Jones M."/>
            <person name="Leather S."/>
            <person name="McDonald S."/>
            <person name="McLean J."/>
            <person name="Mooney P."/>
            <person name="Moule S."/>
            <person name="Mungall K.L."/>
            <person name="Murphy L.D."/>
            <person name="Niblett D."/>
            <person name="Odell C."/>
            <person name="Oliver K."/>
            <person name="O'Neil S."/>
            <person name="Pearson D."/>
            <person name="Quail M.A."/>
            <person name="Rabbinowitsch E."/>
            <person name="Rutherford K.M."/>
            <person name="Rutter S."/>
            <person name="Saunders D."/>
            <person name="Seeger K."/>
            <person name="Sharp S."/>
            <person name="Skelton J."/>
            <person name="Simmonds M.N."/>
            <person name="Squares R."/>
            <person name="Squares S."/>
            <person name="Stevens K."/>
            <person name="Taylor K."/>
            <person name="Taylor R.G."/>
            <person name="Tivey A."/>
            <person name="Walsh S.V."/>
            <person name="Warren T."/>
            <person name="Whitehead S."/>
            <person name="Woodward J.R."/>
            <person name="Volckaert G."/>
            <person name="Aert R."/>
            <person name="Robben J."/>
            <person name="Grymonprez B."/>
            <person name="Weltjens I."/>
            <person name="Vanstreels E."/>
            <person name="Rieger M."/>
            <person name="Schaefer M."/>
            <person name="Mueller-Auer S."/>
            <person name="Gabel C."/>
            <person name="Fuchs M."/>
            <person name="Duesterhoeft A."/>
            <person name="Fritzc C."/>
            <person name="Holzer E."/>
            <person name="Moestl D."/>
            <person name="Hilbert H."/>
            <person name="Borzym K."/>
            <person name="Langer I."/>
            <person name="Beck A."/>
            <person name="Lehrach H."/>
            <person name="Reinhardt R."/>
            <person name="Pohl T.M."/>
            <person name="Eger P."/>
            <person name="Zimmermann W."/>
            <person name="Wedler H."/>
            <person name="Wambutt R."/>
            <person name="Purnelle B."/>
            <person name="Goffeau A."/>
            <person name="Cadieu E."/>
            <person name="Dreano S."/>
            <person name="Gloux S."/>
            <person name="Lelaure V."/>
            <person name="Mottier S."/>
            <person name="Galibert F."/>
            <person name="Aves S.J."/>
            <person name="Xiang Z."/>
            <person name="Hunt C."/>
            <person name="Moore K."/>
            <person name="Hurst S.M."/>
            <person name="Lucas M."/>
            <person name="Rochet M."/>
            <person name="Gaillardin C."/>
            <person name="Tallada V.A."/>
            <person name="Garzon A."/>
            <person name="Thode G."/>
            <person name="Daga R.R."/>
            <person name="Cruzado L."/>
            <person name="Jimenez J."/>
            <person name="Sanchez M."/>
            <person name="del Rey F."/>
            <person name="Benito J."/>
            <person name="Dominguez A."/>
            <person name="Revuelta J.L."/>
            <person name="Moreno S."/>
            <person name="Armstrong J."/>
            <person name="Forsburg S.L."/>
            <person name="Cerutti L."/>
            <person name="Lowe T."/>
            <person name="McCombie W.R."/>
            <person name="Paulsen I."/>
            <person name="Potashkin J."/>
            <person name="Shpakovski G.V."/>
            <person name="Ussery D."/>
            <person name="Barrell B.G."/>
            <person name="Nurse P."/>
        </authorList>
    </citation>
    <scope>NUCLEOTIDE SEQUENCE [LARGE SCALE GENOMIC DNA]</scope>
    <source>
        <strain>972 / ATCC 24843</strain>
    </source>
</reference>
<evidence type="ECO:0000255" key="1">
    <source>
        <dbReference type="PROSITE-ProRule" id="PRU00388"/>
    </source>
</evidence>
<evidence type="ECO:0000255" key="2">
    <source>
        <dbReference type="PROSITE-ProRule" id="PRU10133"/>
    </source>
</evidence>
<evidence type="ECO:0000269" key="3">
    <source>
    </source>
</evidence>
<dbReference type="EC" id="2.3.2.23"/>
<dbReference type="EMBL" id="AF470232">
    <property type="protein sequence ID" value="AAL79844.1"/>
    <property type="molecule type" value="mRNA"/>
</dbReference>
<dbReference type="EMBL" id="CU329670">
    <property type="protein sequence ID" value="CAB11183.1"/>
    <property type="molecule type" value="Genomic_DNA"/>
</dbReference>
<dbReference type="PIR" id="T37532">
    <property type="entry name" value="T37532"/>
</dbReference>
<dbReference type="RefSeq" id="NP_594929.1">
    <property type="nucleotide sequence ID" value="NM_001020360.2"/>
</dbReference>
<dbReference type="SMR" id="O13685"/>
<dbReference type="BioGRID" id="279366">
    <property type="interactions" value="47"/>
</dbReference>
<dbReference type="FunCoup" id="O13685">
    <property type="interactions" value="802"/>
</dbReference>
<dbReference type="STRING" id="284812.O13685"/>
<dbReference type="iPTMnet" id="O13685"/>
<dbReference type="PaxDb" id="4896-SPAC11E3.04c.1"/>
<dbReference type="EnsemblFungi" id="SPAC11E3.04c.1">
    <property type="protein sequence ID" value="SPAC11E3.04c.1:pep"/>
    <property type="gene ID" value="SPAC11E3.04c"/>
</dbReference>
<dbReference type="GeneID" id="2542925"/>
<dbReference type="KEGG" id="spo:2542925"/>
<dbReference type="PomBase" id="SPAC11E3.04c">
    <property type="gene designation" value="ubc13"/>
</dbReference>
<dbReference type="VEuPathDB" id="FungiDB:SPAC11E3.04c"/>
<dbReference type="eggNOG" id="KOG0417">
    <property type="taxonomic scope" value="Eukaryota"/>
</dbReference>
<dbReference type="HOGENOM" id="CLU_030988_13_2_1"/>
<dbReference type="InParanoid" id="O13685"/>
<dbReference type="OMA" id="AEPHEDN"/>
<dbReference type="PhylomeDB" id="O13685"/>
<dbReference type="Reactome" id="R-SPO-5205685">
    <property type="pathway name" value="PINK1-PRKN Mediated Mitophagy"/>
</dbReference>
<dbReference type="Reactome" id="R-SPO-5693565">
    <property type="pathway name" value="Recruitment and ATM-mediated phosphorylation of repair and signaling proteins at DNA double strand breaks"/>
</dbReference>
<dbReference type="Reactome" id="R-SPO-8866654">
    <property type="pathway name" value="E3 ubiquitin ligases ubiquitinate target proteins"/>
</dbReference>
<dbReference type="Reactome" id="R-SPO-9020702">
    <property type="pathway name" value="Interleukin-1 signaling"/>
</dbReference>
<dbReference type="Reactome" id="R-SPO-9646399">
    <property type="pathway name" value="Aggrephagy"/>
</dbReference>
<dbReference type="Reactome" id="R-SPO-983168">
    <property type="pathway name" value="Antigen processing: Ubiquitination &amp; Proteasome degradation"/>
</dbReference>
<dbReference type="UniPathway" id="UPA00143"/>
<dbReference type="PRO" id="PR:O13685"/>
<dbReference type="Proteomes" id="UP000002485">
    <property type="component" value="Chromosome I"/>
</dbReference>
<dbReference type="GO" id="GO:0005829">
    <property type="term" value="C:cytosol"/>
    <property type="evidence" value="ECO:0007005"/>
    <property type="project" value="PomBase"/>
</dbReference>
<dbReference type="GO" id="GO:0005634">
    <property type="term" value="C:nucleus"/>
    <property type="evidence" value="ECO:0007005"/>
    <property type="project" value="PomBase"/>
</dbReference>
<dbReference type="GO" id="GO:0005524">
    <property type="term" value="F:ATP binding"/>
    <property type="evidence" value="ECO:0007669"/>
    <property type="project" value="UniProtKB-KW"/>
</dbReference>
<dbReference type="GO" id="GO:0061631">
    <property type="term" value="F:ubiquitin conjugating enzyme activity"/>
    <property type="evidence" value="ECO:0000314"/>
    <property type="project" value="PomBase"/>
</dbReference>
<dbReference type="GO" id="GO:0061630">
    <property type="term" value="F:ubiquitin protein ligase activity"/>
    <property type="evidence" value="ECO:0000315"/>
    <property type="project" value="PomBase"/>
</dbReference>
<dbReference type="GO" id="GO:0120113">
    <property type="term" value="P:cytoplasm to vacuole targeting by the NVT pathway"/>
    <property type="evidence" value="ECO:0000315"/>
    <property type="project" value="PomBase"/>
</dbReference>
<dbReference type="GO" id="GO:0006301">
    <property type="term" value="P:postreplication repair"/>
    <property type="evidence" value="ECO:0000315"/>
    <property type="project" value="PomBase"/>
</dbReference>
<dbReference type="GO" id="GO:0070534">
    <property type="term" value="P:protein K63-linked ubiquitination"/>
    <property type="evidence" value="ECO:0000318"/>
    <property type="project" value="GO_Central"/>
</dbReference>
<dbReference type="GO" id="GO:0070914">
    <property type="term" value="P:UV-damage excision repair"/>
    <property type="evidence" value="ECO:0000315"/>
    <property type="project" value="PomBase"/>
</dbReference>
<dbReference type="CDD" id="cd23813">
    <property type="entry name" value="UBCc_UBE2N"/>
    <property type="match status" value="1"/>
</dbReference>
<dbReference type="FunFam" id="3.10.110.10:FF:000091">
    <property type="entry name" value="Ubiquitin-conjugating enzyme E2 N"/>
    <property type="match status" value="1"/>
</dbReference>
<dbReference type="Gene3D" id="3.10.110.10">
    <property type="entry name" value="Ubiquitin Conjugating Enzyme"/>
    <property type="match status" value="1"/>
</dbReference>
<dbReference type="InterPro" id="IPR050113">
    <property type="entry name" value="Ub_conjugating_enzyme"/>
</dbReference>
<dbReference type="InterPro" id="IPR000608">
    <property type="entry name" value="UBQ-conjugat_E2_core"/>
</dbReference>
<dbReference type="InterPro" id="IPR023313">
    <property type="entry name" value="UBQ-conjugating_AS"/>
</dbReference>
<dbReference type="InterPro" id="IPR016135">
    <property type="entry name" value="UBQ-conjugating_enzyme/RWD"/>
</dbReference>
<dbReference type="PANTHER" id="PTHR24067">
    <property type="entry name" value="UBIQUITIN-CONJUGATING ENZYME E2"/>
    <property type="match status" value="1"/>
</dbReference>
<dbReference type="Pfam" id="PF00179">
    <property type="entry name" value="UQ_con"/>
    <property type="match status" value="1"/>
</dbReference>
<dbReference type="SMART" id="SM00212">
    <property type="entry name" value="UBCc"/>
    <property type="match status" value="1"/>
</dbReference>
<dbReference type="SUPFAM" id="SSF54495">
    <property type="entry name" value="UBC-like"/>
    <property type="match status" value="1"/>
</dbReference>
<dbReference type="PROSITE" id="PS00183">
    <property type="entry name" value="UBC_1"/>
    <property type="match status" value="1"/>
</dbReference>
<dbReference type="PROSITE" id="PS50127">
    <property type="entry name" value="UBC_2"/>
    <property type="match status" value="1"/>
</dbReference>
<organism>
    <name type="scientific">Schizosaccharomyces pombe (strain 972 / ATCC 24843)</name>
    <name type="common">Fission yeast</name>
    <dbReference type="NCBI Taxonomy" id="284812"/>
    <lineage>
        <taxon>Eukaryota</taxon>
        <taxon>Fungi</taxon>
        <taxon>Dikarya</taxon>
        <taxon>Ascomycota</taxon>
        <taxon>Taphrinomycotina</taxon>
        <taxon>Schizosaccharomycetes</taxon>
        <taxon>Schizosaccharomycetales</taxon>
        <taxon>Schizosaccharomycetaceae</taxon>
        <taxon>Schizosaccharomyces</taxon>
    </lineage>
</organism>
<feature type="chain" id="PRO_0000082564" description="Ubiquitin-conjugating enzyme E2 13">
    <location>
        <begin position="1"/>
        <end position="148"/>
    </location>
</feature>
<feature type="domain" description="UBC core" evidence="1">
    <location>
        <begin position="2"/>
        <end position="148"/>
    </location>
</feature>
<feature type="active site" description="Glycyl thioester intermediate" evidence="1 2">
    <location>
        <position position="86"/>
    </location>
</feature>
<gene>
    <name type="primary">ubc13</name>
    <name type="synonym">spu13</name>
    <name type="ORF">SPAC11E3.04c</name>
</gene>